<evidence type="ECO:0000255" key="1">
    <source>
        <dbReference type="HAMAP-Rule" id="MF_00201"/>
    </source>
</evidence>
<comment type="function">
    <text evidence="1">Involved in DNA repair and RecF pathway recombination.</text>
</comment>
<comment type="similarity">
    <text evidence="1">Belongs to the RecO family.</text>
</comment>
<feature type="chain" id="PRO_0000264837" description="DNA repair protein RecO">
    <location>
        <begin position="1"/>
        <end position="254"/>
    </location>
</feature>
<name>RECO_RHOPB</name>
<accession>Q214J3</accession>
<sequence>MEWTDEGIVLGVRRHGESSAIVELLTRGHGRHLGLVRGGAGSKLRPLLQPGNSVSAVWRARLDEHLGYYVLEGTRMRAAMLLASSHAVYGVTHLASLARLLPERDPQPEIYERLERTLDDFDDVGEAAVHVIRFELTMLAELGFGLDLANCAATGVTSDLIYVSPKSGGAVSRAAGEPWRDKLLRLPPFLREGSAQRNDWSDQDLQDGFLLTGRFLLRNVLEPRGQGHSDARDGFINAVVRLRTRELAETAPPK</sequence>
<keyword id="KW-0227">DNA damage</keyword>
<keyword id="KW-0233">DNA recombination</keyword>
<keyword id="KW-0234">DNA repair</keyword>
<proteinExistence type="inferred from homology"/>
<gene>
    <name evidence="1" type="primary">recO</name>
    <name type="ordered locus">RPC_2643</name>
</gene>
<dbReference type="EMBL" id="CP000301">
    <property type="protein sequence ID" value="ABD88193.1"/>
    <property type="molecule type" value="Genomic_DNA"/>
</dbReference>
<dbReference type="SMR" id="Q214J3"/>
<dbReference type="STRING" id="316056.RPC_2643"/>
<dbReference type="KEGG" id="rpc:RPC_2643"/>
<dbReference type="eggNOG" id="COG1381">
    <property type="taxonomic scope" value="Bacteria"/>
</dbReference>
<dbReference type="HOGENOM" id="CLU_086029_0_0_5"/>
<dbReference type="OrthoDB" id="9804792at2"/>
<dbReference type="GO" id="GO:0043590">
    <property type="term" value="C:bacterial nucleoid"/>
    <property type="evidence" value="ECO:0007669"/>
    <property type="project" value="TreeGrafter"/>
</dbReference>
<dbReference type="GO" id="GO:0006310">
    <property type="term" value="P:DNA recombination"/>
    <property type="evidence" value="ECO:0007669"/>
    <property type="project" value="UniProtKB-UniRule"/>
</dbReference>
<dbReference type="GO" id="GO:0006302">
    <property type="term" value="P:double-strand break repair"/>
    <property type="evidence" value="ECO:0007669"/>
    <property type="project" value="TreeGrafter"/>
</dbReference>
<dbReference type="Gene3D" id="2.40.50.140">
    <property type="entry name" value="Nucleic acid-binding proteins"/>
    <property type="match status" value="1"/>
</dbReference>
<dbReference type="Gene3D" id="1.20.1440.120">
    <property type="entry name" value="Recombination protein O, C-terminal domain"/>
    <property type="match status" value="1"/>
</dbReference>
<dbReference type="HAMAP" id="MF_00201">
    <property type="entry name" value="RecO"/>
    <property type="match status" value="1"/>
</dbReference>
<dbReference type="InterPro" id="IPR037278">
    <property type="entry name" value="ARFGAP/RecO"/>
</dbReference>
<dbReference type="InterPro" id="IPR022572">
    <property type="entry name" value="DNA_rep/recomb_RecO_N"/>
</dbReference>
<dbReference type="InterPro" id="IPR012340">
    <property type="entry name" value="NA-bd_OB-fold"/>
</dbReference>
<dbReference type="InterPro" id="IPR003717">
    <property type="entry name" value="RecO"/>
</dbReference>
<dbReference type="InterPro" id="IPR042242">
    <property type="entry name" value="RecO_C"/>
</dbReference>
<dbReference type="NCBIfam" id="TIGR00613">
    <property type="entry name" value="reco"/>
    <property type="match status" value="1"/>
</dbReference>
<dbReference type="PANTHER" id="PTHR33991">
    <property type="entry name" value="DNA REPAIR PROTEIN RECO"/>
    <property type="match status" value="1"/>
</dbReference>
<dbReference type="PANTHER" id="PTHR33991:SF1">
    <property type="entry name" value="DNA REPAIR PROTEIN RECO"/>
    <property type="match status" value="1"/>
</dbReference>
<dbReference type="Pfam" id="PF02565">
    <property type="entry name" value="RecO_C"/>
    <property type="match status" value="1"/>
</dbReference>
<dbReference type="Pfam" id="PF11967">
    <property type="entry name" value="RecO_N"/>
    <property type="match status" value="1"/>
</dbReference>
<dbReference type="SUPFAM" id="SSF57863">
    <property type="entry name" value="ArfGap/RecO-like zinc finger"/>
    <property type="match status" value="1"/>
</dbReference>
<dbReference type="SUPFAM" id="SSF50249">
    <property type="entry name" value="Nucleic acid-binding proteins"/>
    <property type="match status" value="1"/>
</dbReference>
<organism>
    <name type="scientific">Rhodopseudomonas palustris (strain BisB18)</name>
    <dbReference type="NCBI Taxonomy" id="316056"/>
    <lineage>
        <taxon>Bacteria</taxon>
        <taxon>Pseudomonadati</taxon>
        <taxon>Pseudomonadota</taxon>
        <taxon>Alphaproteobacteria</taxon>
        <taxon>Hyphomicrobiales</taxon>
        <taxon>Nitrobacteraceae</taxon>
        <taxon>Rhodopseudomonas</taxon>
    </lineage>
</organism>
<protein>
    <recommendedName>
        <fullName evidence="1">DNA repair protein RecO</fullName>
    </recommendedName>
    <alternativeName>
        <fullName evidence="1">Recombination protein O</fullName>
    </alternativeName>
</protein>
<reference key="1">
    <citation type="submission" date="2006-03" db="EMBL/GenBank/DDBJ databases">
        <title>Complete sequence of Rhodopseudomonas palustris BisB18.</title>
        <authorList>
            <consortium name="US DOE Joint Genome Institute"/>
            <person name="Copeland A."/>
            <person name="Lucas S."/>
            <person name="Lapidus A."/>
            <person name="Barry K."/>
            <person name="Detter J.C."/>
            <person name="Glavina del Rio T."/>
            <person name="Hammon N."/>
            <person name="Israni S."/>
            <person name="Dalin E."/>
            <person name="Tice H."/>
            <person name="Pitluck S."/>
            <person name="Chain P."/>
            <person name="Malfatti S."/>
            <person name="Shin M."/>
            <person name="Vergez L."/>
            <person name="Schmutz J."/>
            <person name="Larimer F."/>
            <person name="Land M."/>
            <person name="Hauser L."/>
            <person name="Pelletier D.A."/>
            <person name="Kyrpides N."/>
            <person name="Anderson I."/>
            <person name="Oda Y."/>
            <person name="Harwood C.S."/>
            <person name="Richardson P."/>
        </authorList>
    </citation>
    <scope>NUCLEOTIDE SEQUENCE [LARGE SCALE GENOMIC DNA]</scope>
    <source>
        <strain>BisB18</strain>
    </source>
</reference>